<reference key="1">
    <citation type="journal article" date="2008" name="Antimicrob. Agents Chemother.">
        <title>Whole-genome pyrosequencing of an epidemic multidrug-resistant Acinetobacter baumannii strain belonging to the European clone II group.</title>
        <authorList>
            <person name="Iacono M."/>
            <person name="Villa L."/>
            <person name="Fortini D."/>
            <person name="Bordoni R."/>
            <person name="Imperi F."/>
            <person name="Bonnal R.J."/>
            <person name="Sicheritz-Ponten T."/>
            <person name="De Bellis G."/>
            <person name="Visca P."/>
            <person name="Cassone A."/>
            <person name="Carattoli A."/>
        </authorList>
    </citation>
    <scope>NUCLEOTIDE SEQUENCE [LARGE SCALE GENOMIC DNA]</scope>
    <source>
        <strain>ACICU</strain>
    </source>
</reference>
<evidence type="ECO:0000250" key="1">
    <source>
        <dbReference type="UniProtKB" id="Q9KNM4"/>
    </source>
</evidence>
<evidence type="ECO:0000250" key="2">
    <source>
        <dbReference type="UniProtKB" id="Q9KTX4"/>
    </source>
</evidence>
<evidence type="ECO:0000255" key="3">
    <source>
        <dbReference type="HAMAP-Rule" id="MF_00451"/>
    </source>
</evidence>
<name>NDK_ACIBC</name>
<dbReference type="EC" id="2.7.4.6" evidence="3"/>
<dbReference type="EMBL" id="CP000863">
    <property type="protein sequence ID" value="ACC55819.1"/>
    <property type="molecule type" value="Genomic_DNA"/>
</dbReference>
<dbReference type="RefSeq" id="WP_000963851.1">
    <property type="nucleotide sequence ID" value="NZ_CP031380.1"/>
</dbReference>
<dbReference type="SMR" id="B2I3E1"/>
<dbReference type="GeneID" id="92892501"/>
<dbReference type="KEGG" id="abc:ACICU_00507"/>
<dbReference type="HOGENOM" id="CLU_060216_8_1_6"/>
<dbReference type="Proteomes" id="UP000008839">
    <property type="component" value="Chromosome"/>
</dbReference>
<dbReference type="GO" id="GO:0005737">
    <property type="term" value="C:cytoplasm"/>
    <property type="evidence" value="ECO:0007669"/>
    <property type="project" value="UniProtKB-SubCell"/>
</dbReference>
<dbReference type="GO" id="GO:0005524">
    <property type="term" value="F:ATP binding"/>
    <property type="evidence" value="ECO:0007669"/>
    <property type="project" value="UniProtKB-UniRule"/>
</dbReference>
<dbReference type="GO" id="GO:0046872">
    <property type="term" value="F:metal ion binding"/>
    <property type="evidence" value="ECO:0007669"/>
    <property type="project" value="UniProtKB-KW"/>
</dbReference>
<dbReference type="GO" id="GO:0004550">
    <property type="term" value="F:nucleoside diphosphate kinase activity"/>
    <property type="evidence" value="ECO:0007669"/>
    <property type="project" value="UniProtKB-UniRule"/>
</dbReference>
<dbReference type="GO" id="GO:0006241">
    <property type="term" value="P:CTP biosynthetic process"/>
    <property type="evidence" value="ECO:0007669"/>
    <property type="project" value="UniProtKB-UniRule"/>
</dbReference>
<dbReference type="GO" id="GO:0006183">
    <property type="term" value="P:GTP biosynthetic process"/>
    <property type="evidence" value="ECO:0007669"/>
    <property type="project" value="UniProtKB-UniRule"/>
</dbReference>
<dbReference type="GO" id="GO:0006228">
    <property type="term" value="P:UTP biosynthetic process"/>
    <property type="evidence" value="ECO:0007669"/>
    <property type="project" value="UniProtKB-UniRule"/>
</dbReference>
<dbReference type="CDD" id="cd04413">
    <property type="entry name" value="NDPk_I"/>
    <property type="match status" value="1"/>
</dbReference>
<dbReference type="FunFam" id="3.30.70.141:FF:000001">
    <property type="entry name" value="Nucleoside diphosphate kinase"/>
    <property type="match status" value="1"/>
</dbReference>
<dbReference type="Gene3D" id="3.30.70.141">
    <property type="entry name" value="Nucleoside diphosphate kinase-like domain"/>
    <property type="match status" value="1"/>
</dbReference>
<dbReference type="HAMAP" id="MF_00451">
    <property type="entry name" value="NDP_kinase"/>
    <property type="match status" value="1"/>
</dbReference>
<dbReference type="InterPro" id="IPR034907">
    <property type="entry name" value="NDK-like_dom"/>
</dbReference>
<dbReference type="InterPro" id="IPR036850">
    <property type="entry name" value="NDK-like_dom_sf"/>
</dbReference>
<dbReference type="InterPro" id="IPR001564">
    <property type="entry name" value="Nucleoside_diP_kinase"/>
</dbReference>
<dbReference type="InterPro" id="IPR023005">
    <property type="entry name" value="Nucleoside_diP_kinase_AS"/>
</dbReference>
<dbReference type="NCBIfam" id="NF001908">
    <property type="entry name" value="PRK00668.1"/>
    <property type="match status" value="1"/>
</dbReference>
<dbReference type="PANTHER" id="PTHR46161">
    <property type="entry name" value="NUCLEOSIDE DIPHOSPHATE KINASE"/>
    <property type="match status" value="1"/>
</dbReference>
<dbReference type="PANTHER" id="PTHR46161:SF3">
    <property type="entry name" value="NUCLEOSIDE DIPHOSPHATE KINASE DDB_G0292928-RELATED"/>
    <property type="match status" value="1"/>
</dbReference>
<dbReference type="Pfam" id="PF00334">
    <property type="entry name" value="NDK"/>
    <property type="match status" value="1"/>
</dbReference>
<dbReference type="PRINTS" id="PR01243">
    <property type="entry name" value="NUCDPKINASE"/>
</dbReference>
<dbReference type="SMART" id="SM00562">
    <property type="entry name" value="NDK"/>
    <property type="match status" value="1"/>
</dbReference>
<dbReference type="SUPFAM" id="SSF54919">
    <property type="entry name" value="Nucleoside diphosphate kinase, NDK"/>
    <property type="match status" value="1"/>
</dbReference>
<dbReference type="PROSITE" id="PS00469">
    <property type="entry name" value="NDPK"/>
    <property type="match status" value="1"/>
</dbReference>
<dbReference type="PROSITE" id="PS51374">
    <property type="entry name" value="NDPK_LIKE"/>
    <property type="match status" value="1"/>
</dbReference>
<sequence length="143" mass="15462">MAIERTLSIVKPDAVSKNHIGEIFARFEKAGLKIVATKMKHLSQADAEGFYAEHKERGFFGDLVAFMTSGPVVVSVLEGENAVLAHREILGATNPKEAAPGTIRADFAVSIDENAAHGSDSVASAEREIAYFFADNEICPRTR</sequence>
<organism>
    <name type="scientific">Acinetobacter baumannii (strain ACICU)</name>
    <dbReference type="NCBI Taxonomy" id="405416"/>
    <lineage>
        <taxon>Bacteria</taxon>
        <taxon>Pseudomonadati</taxon>
        <taxon>Pseudomonadota</taxon>
        <taxon>Gammaproteobacteria</taxon>
        <taxon>Moraxellales</taxon>
        <taxon>Moraxellaceae</taxon>
        <taxon>Acinetobacter</taxon>
        <taxon>Acinetobacter calcoaceticus/baumannii complex</taxon>
    </lineage>
</organism>
<keyword id="KW-0067">ATP-binding</keyword>
<keyword id="KW-0963">Cytoplasm</keyword>
<keyword id="KW-0418">Kinase</keyword>
<keyword id="KW-0460">Magnesium</keyword>
<keyword id="KW-0479">Metal-binding</keyword>
<keyword id="KW-0546">Nucleotide metabolism</keyword>
<keyword id="KW-0547">Nucleotide-binding</keyword>
<keyword id="KW-0597">Phosphoprotein</keyword>
<keyword id="KW-0808">Transferase</keyword>
<gene>
    <name evidence="3" type="primary">ndk</name>
    <name type="ordered locus">ACICU_00507</name>
</gene>
<accession>B2I3E1</accession>
<protein>
    <recommendedName>
        <fullName evidence="3">Nucleoside diphosphate kinase</fullName>
        <shortName evidence="3">NDK</shortName>
        <shortName evidence="3">NDP kinase</shortName>
        <ecNumber evidence="3">2.7.4.6</ecNumber>
    </recommendedName>
    <alternativeName>
        <fullName evidence="3">Nucleoside-2-P kinase</fullName>
    </alternativeName>
</protein>
<comment type="function">
    <text evidence="3">Major role in the synthesis of nucleoside triphosphates other than ATP. The ATP gamma phosphate is transferred to the NDP beta phosphate via a ping-pong mechanism, using a phosphorylated active-site intermediate.</text>
</comment>
<comment type="function">
    <text evidence="1">(Microbial infection) Catalyzes the phosphorylation of dZDP to dZTP, when the bacterium is infected by a phage that produces the substrate for the synthesis of dZTP (2- amino-2'-deoxyadenosine 5'-triphosphate), which is then used by the phage as a DNA polymerase substrate.</text>
</comment>
<comment type="catalytic activity">
    <reaction evidence="2">
        <text>dZDP + ATP = dZTP + ADP</text>
        <dbReference type="Rhea" id="RHEA:67644"/>
        <dbReference type="ChEBI" id="CHEBI:30616"/>
        <dbReference type="ChEBI" id="CHEBI:172929"/>
        <dbReference type="ChEBI" id="CHEBI:172931"/>
        <dbReference type="ChEBI" id="CHEBI:456216"/>
    </reaction>
</comment>
<comment type="catalytic activity">
    <reaction evidence="3">
        <text>a 2'-deoxyribonucleoside 5'-diphosphate + ATP = a 2'-deoxyribonucleoside 5'-triphosphate + ADP</text>
        <dbReference type="Rhea" id="RHEA:44640"/>
        <dbReference type="ChEBI" id="CHEBI:30616"/>
        <dbReference type="ChEBI" id="CHEBI:61560"/>
        <dbReference type="ChEBI" id="CHEBI:73316"/>
        <dbReference type="ChEBI" id="CHEBI:456216"/>
        <dbReference type="EC" id="2.7.4.6"/>
    </reaction>
</comment>
<comment type="catalytic activity">
    <reaction evidence="3">
        <text>a ribonucleoside 5'-diphosphate + ATP = a ribonucleoside 5'-triphosphate + ADP</text>
        <dbReference type="Rhea" id="RHEA:18113"/>
        <dbReference type="ChEBI" id="CHEBI:30616"/>
        <dbReference type="ChEBI" id="CHEBI:57930"/>
        <dbReference type="ChEBI" id="CHEBI:61557"/>
        <dbReference type="ChEBI" id="CHEBI:456216"/>
        <dbReference type="EC" id="2.7.4.6"/>
    </reaction>
</comment>
<comment type="cofactor">
    <cofactor evidence="3">
        <name>Mg(2+)</name>
        <dbReference type="ChEBI" id="CHEBI:18420"/>
    </cofactor>
</comment>
<comment type="pathway">
    <text evidence="2">Purine metabolism.</text>
</comment>
<comment type="subunit">
    <text evidence="3">Homotetramer.</text>
</comment>
<comment type="subcellular location">
    <subcellularLocation>
        <location evidence="3">Cytoplasm</location>
    </subcellularLocation>
</comment>
<comment type="similarity">
    <text evidence="3">Belongs to the NDK family.</text>
</comment>
<proteinExistence type="inferred from homology"/>
<feature type="chain" id="PRO_1000192246" description="Nucleoside diphosphate kinase">
    <location>
        <begin position="1"/>
        <end position="143"/>
    </location>
</feature>
<feature type="active site" description="Pros-phosphohistidine intermediate" evidence="3">
    <location>
        <position position="117"/>
    </location>
</feature>
<feature type="binding site" evidence="3">
    <location>
        <position position="11"/>
    </location>
    <ligand>
        <name>ATP</name>
        <dbReference type="ChEBI" id="CHEBI:30616"/>
    </ligand>
</feature>
<feature type="binding site" evidence="3">
    <location>
        <position position="59"/>
    </location>
    <ligand>
        <name>ATP</name>
        <dbReference type="ChEBI" id="CHEBI:30616"/>
    </ligand>
</feature>
<feature type="binding site" evidence="3">
    <location>
        <position position="87"/>
    </location>
    <ligand>
        <name>ATP</name>
        <dbReference type="ChEBI" id="CHEBI:30616"/>
    </ligand>
</feature>
<feature type="binding site" evidence="3">
    <location>
        <position position="93"/>
    </location>
    <ligand>
        <name>ATP</name>
        <dbReference type="ChEBI" id="CHEBI:30616"/>
    </ligand>
</feature>
<feature type="binding site" evidence="3">
    <location>
        <position position="104"/>
    </location>
    <ligand>
        <name>ATP</name>
        <dbReference type="ChEBI" id="CHEBI:30616"/>
    </ligand>
</feature>
<feature type="binding site" evidence="3">
    <location>
        <position position="114"/>
    </location>
    <ligand>
        <name>ATP</name>
        <dbReference type="ChEBI" id="CHEBI:30616"/>
    </ligand>
</feature>